<dbReference type="EC" id="4.3.2.7" evidence="2"/>
<dbReference type="EMBL" id="BC082031">
    <property type="protein sequence ID" value="AAH82031.1"/>
    <property type="molecule type" value="mRNA"/>
</dbReference>
<dbReference type="RefSeq" id="NP_001020187.1">
    <property type="nucleotide sequence ID" value="NM_001025016.1"/>
</dbReference>
<dbReference type="SMR" id="Q641Z5"/>
<dbReference type="FunCoup" id="Q641Z5">
    <property type="interactions" value="789"/>
</dbReference>
<dbReference type="STRING" id="10116.ENSRNOP00000002094"/>
<dbReference type="PhosphoSitePlus" id="Q641Z5"/>
<dbReference type="jPOST" id="Q641Z5"/>
<dbReference type="PaxDb" id="10116-ENSRNOP00000002094"/>
<dbReference type="Ensembl" id="ENSRNOT00000115752.1">
    <property type="protein sequence ID" value="ENSRNOP00000097905.1"/>
    <property type="gene ID" value="ENSRNOG00000070799.1"/>
</dbReference>
<dbReference type="GeneID" id="360994"/>
<dbReference type="KEGG" id="rno:360994"/>
<dbReference type="UCSC" id="RGD:1309120">
    <property type="organism name" value="rat"/>
</dbReference>
<dbReference type="AGR" id="RGD:1309120"/>
<dbReference type="CTD" id="494143"/>
<dbReference type="RGD" id="1309120">
    <property type="gene designation" value="Chac2"/>
</dbReference>
<dbReference type="eggNOG" id="KOG3182">
    <property type="taxonomic scope" value="Eukaryota"/>
</dbReference>
<dbReference type="GeneTree" id="ENSGT00390000003855"/>
<dbReference type="HOGENOM" id="CLU_070703_2_2_1"/>
<dbReference type="InParanoid" id="Q641Z5"/>
<dbReference type="OMA" id="DHREKDG"/>
<dbReference type="OrthoDB" id="1933483at2759"/>
<dbReference type="PhylomeDB" id="Q641Z5"/>
<dbReference type="TreeFam" id="TF313048"/>
<dbReference type="Reactome" id="R-RNO-174403">
    <property type="pathway name" value="Glutathione synthesis and recycling"/>
</dbReference>
<dbReference type="PRO" id="PR:Q641Z5"/>
<dbReference type="Proteomes" id="UP000002494">
    <property type="component" value="Chromosome 14"/>
</dbReference>
<dbReference type="Bgee" id="ENSRNOG00000001531">
    <property type="expression patterns" value="Expressed in stomach and 20 other cell types or tissues"/>
</dbReference>
<dbReference type="GO" id="GO:0005737">
    <property type="term" value="C:cytoplasm"/>
    <property type="evidence" value="ECO:0000318"/>
    <property type="project" value="GO_Central"/>
</dbReference>
<dbReference type="GO" id="GO:0005829">
    <property type="term" value="C:cytosol"/>
    <property type="evidence" value="ECO:0007669"/>
    <property type="project" value="UniProtKB-SubCell"/>
</dbReference>
<dbReference type="GO" id="GO:0061928">
    <property type="term" value="F:glutathione specific gamma-glutamylcyclotransferase activity"/>
    <property type="evidence" value="ECO:0000266"/>
    <property type="project" value="RGD"/>
</dbReference>
<dbReference type="GO" id="GO:0006751">
    <property type="term" value="P:glutathione catabolic process"/>
    <property type="evidence" value="ECO:0000318"/>
    <property type="project" value="GO_Central"/>
</dbReference>
<dbReference type="CDD" id="cd06661">
    <property type="entry name" value="GGCT_like"/>
    <property type="match status" value="1"/>
</dbReference>
<dbReference type="FunFam" id="3.10.490.10:FF:000003">
    <property type="entry name" value="Gamma-glutamylcyclotransferase"/>
    <property type="match status" value="1"/>
</dbReference>
<dbReference type="Gene3D" id="3.10.490.10">
    <property type="entry name" value="Gamma-glutamyl cyclotransferase-like"/>
    <property type="match status" value="1"/>
</dbReference>
<dbReference type="InterPro" id="IPR006840">
    <property type="entry name" value="ChaC"/>
</dbReference>
<dbReference type="InterPro" id="IPR013024">
    <property type="entry name" value="GGCT-like"/>
</dbReference>
<dbReference type="InterPro" id="IPR036568">
    <property type="entry name" value="GGCT-like_sf"/>
</dbReference>
<dbReference type="PANTHER" id="PTHR12192">
    <property type="entry name" value="CATION TRANSPORT PROTEIN CHAC-RELATED"/>
    <property type="match status" value="1"/>
</dbReference>
<dbReference type="PANTHER" id="PTHR12192:SF2">
    <property type="entry name" value="GLUTATHIONE-SPECIFIC GAMMA-GLUTAMYLCYCLOTRANSFERASE 2"/>
    <property type="match status" value="1"/>
</dbReference>
<dbReference type="Pfam" id="PF04752">
    <property type="entry name" value="ChaC"/>
    <property type="match status" value="1"/>
</dbReference>
<dbReference type="SUPFAM" id="SSF110857">
    <property type="entry name" value="Gamma-glutamyl cyclotransferase-like"/>
    <property type="match status" value="1"/>
</dbReference>
<protein>
    <recommendedName>
        <fullName evidence="2">Putative glutathione-specific gamma-glutamylcyclotransferase 2</fullName>
        <shortName evidence="2">Gamma-GCG 2</shortName>
        <ecNumber evidence="2">4.3.2.7</ecNumber>
    </recommendedName>
    <alternativeName>
        <fullName evidence="3">Cation transport regulator-like protein 2</fullName>
    </alternativeName>
</protein>
<name>CHAC2_RAT</name>
<gene>
    <name evidence="2" type="primary">Chac2</name>
</gene>
<sequence length="178" mass="20167">MWVFGYGSLIWKVDFPYQDKLVGYITNYSRRFWQGSTDHRGVPGKPGRVVTLVEDPGGSVWGVAYKLPVGKEEEVKTYLDFREKGGYRTTTVIFYPKDSTTKPFSVLLYIGTCDNPNYLGPAPLEDIAEQIFNAAGPSGRNTEYLFELADSIRKLVPEDADEHLFSLEKLVKERLEGK</sequence>
<accession>Q641Z5</accession>
<proteinExistence type="evidence at transcript level"/>
<keyword id="KW-0963">Cytoplasm</keyword>
<keyword id="KW-0456">Lyase</keyword>
<keyword id="KW-1185">Reference proteome</keyword>
<feature type="chain" id="PRO_0000314914" description="Putative glutathione-specific gamma-glutamylcyclotransferase 2">
    <location>
        <begin position="1"/>
        <end position="178"/>
    </location>
</feature>
<feature type="active site" description="Proton acceptor" evidence="1">
    <location>
        <position position="83"/>
    </location>
</feature>
<feature type="binding site" evidence="1">
    <location>
        <begin position="3"/>
        <end position="8"/>
    </location>
    <ligand>
        <name>substrate</name>
    </ligand>
</feature>
<comment type="function">
    <text evidence="2">Catalyzes the cleavage of glutathione into 5-oxo-L-proline and a Cys-Gly dipeptide. Acts specifically on glutathione, but not on other gamma-glutamyl peptides.</text>
</comment>
<comment type="catalytic activity">
    <reaction evidence="2">
        <text>glutathione = L-cysteinylglycine + 5-oxo-L-proline</text>
        <dbReference type="Rhea" id="RHEA:47724"/>
        <dbReference type="ChEBI" id="CHEBI:57925"/>
        <dbReference type="ChEBI" id="CHEBI:58402"/>
        <dbReference type="ChEBI" id="CHEBI:61694"/>
        <dbReference type="EC" id="4.3.2.7"/>
    </reaction>
</comment>
<comment type="subunit">
    <text evidence="2">Monomer.</text>
</comment>
<comment type="subcellular location">
    <subcellularLocation>
        <location evidence="2">Cytoplasm</location>
        <location evidence="2">Cytosol</location>
    </subcellularLocation>
</comment>
<comment type="similarity">
    <text evidence="4">Belongs to the gamma-glutamylcyclotransferase family. ChaC subfamily.</text>
</comment>
<evidence type="ECO:0000250" key="1">
    <source>
        <dbReference type="UniProtKB" id="O75223"/>
    </source>
</evidence>
<evidence type="ECO:0000250" key="2">
    <source>
        <dbReference type="UniProtKB" id="Q8WUX2"/>
    </source>
</evidence>
<evidence type="ECO:0000250" key="3">
    <source>
        <dbReference type="UniProtKB" id="Q9BUX1"/>
    </source>
</evidence>
<evidence type="ECO:0000305" key="4"/>
<reference key="1">
    <citation type="journal article" date="2004" name="Genome Res.">
        <title>The status, quality, and expansion of the NIH full-length cDNA project: the Mammalian Gene Collection (MGC).</title>
        <authorList>
            <consortium name="The MGC Project Team"/>
        </authorList>
    </citation>
    <scope>NUCLEOTIDE SEQUENCE [LARGE SCALE MRNA]</scope>
    <source>
        <tissue>Kidney</tissue>
    </source>
</reference>
<organism>
    <name type="scientific">Rattus norvegicus</name>
    <name type="common">Rat</name>
    <dbReference type="NCBI Taxonomy" id="10116"/>
    <lineage>
        <taxon>Eukaryota</taxon>
        <taxon>Metazoa</taxon>
        <taxon>Chordata</taxon>
        <taxon>Craniata</taxon>
        <taxon>Vertebrata</taxon>
        <taxon>Euteleostomi</taxon>
        <taxon>Mammalia</taxon>
        <taxon>Eutheria</taxon>
        <taxon>Euarchontoglires</taxon>
        <taxon>Glires</taxon>
        <taxon>Rodentia</taxon>
        <taxon>Myomorpha</taxon>
        <taxon>Muroidea</taxon>
        <taxon>Muridae</taxon>
        <taxon>Murinae</taxon>
        <taxon>Rattus</taxon>
    </lineage>
</organism>